<name>SPEB_SHIDS</name>
<sequence>MSTLGHQYDNSLVSNAFGFLRLPMNFQPYDSDADWVITGVPFDMATSGRAGGRHGPAAIRQVSTNLAWEHNRFPWNFDMRERLNVVDCGDLVYAFGDAREMSEKLQAHAEKLLAAGKRMLSFGGDHFVTLPLLRAHAKHFGKMALVHFDAHTDTYANGCEFDHGTMFYTAPKEGLIDPNHSVQIGIRTEFDKDNGFTVLDACQVNDRSVDDVIAQVKQIVGDMPVYLTFDIDCLDPAFAPGTGTPVIGGLTSDRAIKLVRGLKDLNIVGMDVVEVAPAYDQSEITALAAATLALEMLYIQAAKKSE</sequence>
<evidence type="ECO:0000255" key="1">
    <source>
        <dbReference type="HAMAP-Rule" id="MF_01418"/>
    </source>
</evidence>
<feature type="chain" id="PRO_1000024285" description="Agmatinase">
    <location>
        <begin position="1"/>
        <end position="306"/>
    </location>
</feature>
<feature type="binding site" evidence="1">
    <location>
        <position position="126"/>
    </location>
    <ligand>
        <name>Mn(2+)</name>
        <dbReference type="ChEBI" id="CHEBI:29035"/>
    </ligand>
</feature>
<feature type="binding site" evidence="1">
    <location>
        <position position="149"/>
    </location>
    <ligand>
        <name>Mn(2+)</name>
        <dbReference type="ChEBI" id="CHEBI:29035"/>
    </ligand>
</feature>
<feature type="binding site" evidence="1">
    <location>
        <position position="151"/>
    </location>
    <ligand>
        <name>Mn(2+)</name>
        <dbReference type="ChEBI" id="CHEBI:29035"/>
    </ligand>
</feature>
<feature type="binding site" evidence="1">
    <location>
        <position position="153"/>
    </location>
    <ligand>
        <name>Mn(2+)</name>
        <dbReference type="ChEBI" id="CHEBI:29035"/>
    </ligand>
</feature>
<feature type="binding site" evidence="1">
    <location>
        <position position="230"/>
    </location>
    <ligand>
        <name>Mn(2+)</name>
        <dbReference type="ChEBI" id="CHEBI:29035"/>
    </ligand>
</feature>
<feature type="binding site" evidence="1">
    <location>
        <position position="232"/>
    </location>
    <ligand>
        <name>Mn(2+)</name>
        <dbReference type="ChEBI" id="CHEBI:29035"/>
    </ligand>
</feature>
<keyword id="KW-0378">Hydrolase</keyword>
<keyword id="KW-0464">Manganese</keyword>
<keyword id="KW-0479">Metal-binding</keyword>
<keyword id="KW-0620">Polyamine biosynthesis</keyword>
<keyword id="KW-0661">Putrescine biosynthesis</keyword>
<keyword id="KW-1185">Reference proteome</keyword>
<keyword id="KW-0745">Spermidine biosynthesis</keyword>
<dbReference type="EC" id="3.5.3.11" evidence="1"/>
<dbReference type="EMBL" id="CP000034">
    <property type="protein sequence ID" value="ABB63153.1"/>
    <property type="molecule type" value="Genomic_DNA"/>
</dbReference>
<dbReference type="RefSeq" id="WP_000105567.1">
    <property type="nucleotide sequence ID" value="NC_007606.1"/>
</dbReference>
<dbReference type="RefSeq" id="YP_404644.1">
    <property type="nucleotide sequence ID" value="NC_007606.1"/>
</dbReference>
<dbReference type="SMR" id="Q32C02"/>
<dbReference type="STRING" id="300267.SDY_3139"/>
<dbReference type="EnsemblBacteria" id="ABB63153">
    <property type="protein sequence ID" value="ABB63153"/>
    <property type="gene ID" value="SDY_3139"/>
</dbReference>
<dbReference type="KEGG" id="sdy:SDY_3139"/>
<dbReference type="PATRIC" id="fig|300267.13.peg.3748"/>
<dbReference type="HOGENOM" id="CLU_039478_0_0_6"/>
<dbReference type="UniPathway" id="UPA00534">
    <property type="reaction ID" value="UER00287"/>
</dbReference>
<dbReference type="Proteomes" id="UP000002716">
    <property type="component" value="Chromosome"/>
</dbReference>
<dbReference type="GO" id="GO:0008783">
    <property type="term" value="F:agmatinase activity"/>
    <property type="evidence" value="ECO:0007669"/>
    <property type="project" value="UniProtKB-UniRule"/>
</dbReference>
<dbReference type="GO" id="GO:0030145">
    <property type="term" value="F:manganese ion binding"/>
    <property type="evidence" value="ECO:0007669"/>
    <property type="project" value="InterPro"/>
</dbReference>
<dbReference type="GO" id="GO:0033389">
    <property type="term" value="P:putrescine biosynthetic process from arginine, via agmatine"/>
    <property type="evidence" value="ECO:0007669"/>
    <property type="project" value="TreeGrafter"/>
</dbReference>
<dbReference type="GO" id="GO:0008295">
    <property type="term" value="P:spermidine biosynthetic process"/>
    <property type="evidence" value="ECO:0007669"/>
    <property type="project" value="UniProtKB-UniRule"/>
</dbReference>
<dbReference type="CDD" id="cd11592">
    <property type="entry name" value="Agmatinase_PAH"/>
    <property type="match status" value="1"/>
</dbReference>
<dbReference type="FunFam" id="3.40.800.10:FF:000001">
    <property type="entry name" value="Agmatinase"/>
    <property type="match status" value="1"/>
</dbReference>
<dbReference type="Gene3D" id="3.40.800.10">
    <property type="entry name" value="Ureohydrolase domain"/>
    <property type="match status" value="1"/>
</dbReference>
<dbReference type="HAMAP" id="MF_01418">
    <property type="entry name" value="SpeB"/>
    <property type="match status" value="1"/>
</dbReference>
<dbReference type="InterPro" id="IPR023694">
    <property type="entry name" value="Agmatinase"/>
</dbReference>
<dbReference type="InterPro" id="IPR005925">
    <property type="entry name" value="Agmatinase-rel"/>
</dbReference>
<dbReference type="InterPro" id="IPR006035">
    <property type="entry name" value="Ureohydrolase"/>
</dbReference>
<dbReference type="InterPro" id="IPR023696">
    <property type="entry name" value="Ureohydrolase_dom_sf"/>
</dbReference>
<dbReference type="InterPro" id="IPR020855">
    <property type="entry name" value="Ureohydrolase_Mn_BS"/>
</dbReference>
<dbReference type="NCBIfam" id="TIGR01230">
    <property type="entry name" value="agmatinase"/>
    <property type="match status" value="1"/>
</dbReference>
<dbReference type="NCBIfam" id="NF002564">
    <property type="entry name" value="PRK02190.1"/>
    <property type="match status" value="1"/>
</dbReference>
<dbReference type="PANTHER" id="PTHR11358">
    <property type="entry name" value="ARGINASE/AGMATINASE"/>
    <property type="match status" value="1"/>
</dbReference>
<dbReference type="PANTHER" id="PTHR11358:SF26">
    <property type="entry name" value="GUANIDINO ACID HYDROLASE, MITOCHONDRIAL"/>
    <property type="match status" value="1"/>
</dbReference>
<dbReference type="Pfam" id="PF00491">
    <property type="entry name" value="Arginase"/>
    <property type="match status" value="1"/>
</dbReference>
<dbReference type="PIRSF" id="PIRSF036979">
    <property type="entry name" value="Arginase"/>
    <property type="match status" value="1"/>
</dbReference>
<dbReference type="SUPFAM" id="SSF52768">
    <property type="entry name" value="Arginase/deacetylase"/>
    <property type="match status" value="1"/>
</dbReference>
<dbReference type="PROSITE" id="PS01053">
    <property type="entry name" value="ARGINASE_1"/>
    <property type="match status" value="1"/>
</dbReference>
<dbReference type="PROSITE" id="PS51409">
    <property type="entry name" value="ARGINASE_2"/>
    <property type="match status" value="1"/>
</dbReference>
<proteinExistence type="inferred from homology"/>
<organism>
    <name type="scientific">Shigella dysenteriae serotype 1 (strain Sd197)</name>
    <dbReference type="NCBI Taxonomy" id="300267"/>
    <lineage>
        <taxon>Bacteria</taxon>
        <taxon>Pseudomonadati</taxon>
        <taxon>Pseudomonadota</taxon>
        <taxon>Gammaproteobacteria</taxon>
        <taxon>Enterobacterales</taxon>
        <taxon>Enterobacteriaceae</taxon>
        <taxon>Shigella</taxon>
    </lineage>
</organism>
<comment type="function">
    <text evidence="1">Catalyzes the formation of putrescine from agmatine.</text>
</comment>
<comment type="catalytic activity">
    <reaction evidence="1">
        <text>agmatine + H2O = urea + putrescine</text>
        <dbReference type="Rhea" id="RHEA:13929"/>
        <dbReference type="ChEBI" id="CHEBI:15377"/>
        <dbReference type="ChEBI" id="CHEBI:16199"/>
        <dbReference type="ChEBI" id="CHEBI:58145"/>
        <dbReference type="ChEBI" id="CHEBI:326268"/>
        <dbReference type="EC" id="3.5.3.11"/>
    </reaction>
</comment>
<comment type="cofactor">
    <cofactor evidence="1">
        <name>Mn(2+)</name>
        <dbReference type="ChEBI" id="CHEBI:29035"/>
    </cofactor>
</comment>
<comment type="pathway">
    <text evidence="1">Amine and polyamine biosynthesis; putrescine biosynthesis via agmatine pathway; putrescine from agmatine: step 1/1.</text>
</comment>
<comment type="similarity">
    <text evidence="1">Belongs to the arginase family. Agmatinase subfamily.</text>
</comment>
<protein>
    <recommendedName>
        <fullName evidence="1">Agmatinase</fullName>
        <ecNumber evidence="1">3.5.3.11</ecNumber>
    </recommendedName>
    <alternativeName>
        <fullName evidence="1">Agmatine ureohydrolase</fullName>
        <shortName evidence="1">AUH</shortName>
    </alternativeName>
</protein>
<accession>Q32C02</accession>
<reference key="1">
    <citation type="journal article" date="2005" name="Nucleic Acids Res.">
        <title>Genome dynamics and diversity of Shigella species, the etiologic agents of bacillary dysentery.</title>
        <authorList>
            <person name="Yang F."/>
            <person name="Yang J."/>
            <person name="Zhang X."/>
            <person name="Chen L."/>
            <person name="Jiang Y."/>
            <person name="Yan Y."/>
            <person name="Tang X."/>
            <person name="Wang J."/>
            <person name="Xiong Z."/>
            <person name="Dong J."/>
            <person name="Xue Y."/>
            <person name="Zhu Y."/>
            <person name="Xu X."/>
            <person name="Sun L."/>
            <person name="Chen S."/>
            <person name="Nie H."/>
            <person name="Peng J."/>
            <person name="Xu J."/>
            <person name="Wang Y."/>
            <person name="Yuan Z."/>
            <person name="Wen Y."/>
            <person name="Yao Z."/>
            <person name="Shen Y."/>
            <person name="Qiang B."/>
            <person name="Hou Y."/>
            <person name="Yu J."/>
            <person name="Jin Q."/>
        </authorList>
    </citation>
    <scope>NUCLEOTIDE SEQUENCE [LARGE SCALE GENOMIC DNA]</scope>
    <source>
        <strain>Sd197</strain>
    </source>
</reference>
<gene>
    <name evidence="1" type="primary">speB</name>
    <name type="ordered locus">SDY_3139</name>
</gene>